<feature type="chain" id="PRO_0000177458" description="Large ribosomal subunit protein bL35">
    <location>
        <begin position="1"/>
        <end position="64"/>
    </location>
</feature>
<organism>
    <name type="scientific">Wolinella succinogenes (strain ATCC 29543 / DSM 1740 / CCUG 13145 / JCM 31913 / LMG 7466 / NCTC 11488 / FDC 602W)</name>
    <name type="common">Vibrio succinogenes</name>
    <dbReference type="NCBI Taxonomy" id="273121"/>
    <lineage>
        <taxon>Bacteria</taxon>
        <taxon>Pseudomonadati</taxon>
        <taxon>Campylobacterota</taxon>
        <taxon>Epsilonproteobacteria</taxon>
        <taxon>Campylobacterales</taxon>
        <taxon>Helicobacteraceae</taxon>
        <taxon>Wolinella</taxon>
    </lineage>
</organism>
<evidence type="ECO:0000255" key="1">
    <source>
        <dbReference type="HAMAP-Rule" id="MF_00514"/>
    </source>
</evidence>
<evidence type="ECO:0000305" key="2"/>
<sequence>MPKMKTNRGAAKRFKLKKNLIKRGSAFKSHILTKKSAKRKAGLNEPKYVNDANLDSIKKLLCMA</sequence>
<keyword id="KW-1185">Reference proteome</keyword>
<keyword id="KW-0687">Ribonucleoprotein</keyword>
<keyword id="KW-0689">Ribosomal protein</keyword>
<comment type="similarity">
    <text evidence="1">Belongs to the bacterial ribosomal protein bL35 family.</text>
</comment>
<reference key="1">
    <citation type="journal article" date="2003" name="Proc. Natl. Acad. Sci. U.S.A.">
        <title>Complete genome sequence and analysis of Wolinella succinogenes.</title>
        <authorList>
            <person name="Baar C."/>
            <person name="Eppinger M."/>
            <person name="Raddatz G."/>
            <person name="Simon J."/>
            <person name="Lanz C."/>
            <person name="Klimmek O."/>
            <person name="Nandakumar R."/>
            <person name="Gross R."/>
            <person name="Rosinus A."/>
            <person name="Keller H."/>
            <person name="Jagtap P."/>
            <person name="Linke B."/>
            <person name="Meyer F."/>
            <person name="Lederer H."/>
            <person name="Schuster S.C."/>
        </authorList>
    </citation>
    <scope>NUCLEOTIDE SEQUENCE [LARGE SCALE GENOMIC DNA]</scope>
    <source>
        <strain>ATCC 29543 / DSM 1740 / CCUG 13145 / JCM 31913 / LMG 7466 / NCTC 11488 / FDC 602W</strain>
    </source>
</reference>
<accession>Q7M9L8</accession>
<dbReference type="EMBL" id="BX571659">
    <property type="protein sequence ID" value="CAE09935.1"/>
    <property type="molecule type" value="Genomic_DNA"/>
</dbReference>
<dbReference type="RefSeq" id="WP_011138732.1">
    <property type="nucleotide sequence ID" value="NC_005090.1"/>
</dbReference>
<dbReference type="SMR" id="Q7M9L8"/>
<dbReference type="STRING" id="273121.WS0822"/>
<dbReference type="KEGG" id="wsu:WS0822"/>
<dbReference type="eggNOG" id="COG0291">
    <property type="taxonomic scope" value="Bacteria"/>
</dbReference>
<dbReference type="HOGENOM" id="CLU_169643_1_2_7"/>
<dbReference type="Proteomes" id="UP000000422">
    <property type="component" value="Chromosome"/>
</dbReference>
<dbReference type="GO" id="GO:0022625">
    <property type="term" value="C:cytosolic large ribosomal subunit"/>
    <property type="evidence" value="ECO:0007669"/>
    <property type="project" value="TreeGrafter"/>
</dbReference>
<dbReference type="GO" id="GO:0003735">
    <property type="term" value="F:structural constituent of ribosome"/>
    <property type="evidence" value="ECO:0007669"/>
    <property type="project" value="InterPro"/>
</dbReference>
<dbReference type="GO" id="GO:0006412">
    <property type="term" value="P:translation"/>
    <property type="evidence" value="ECO:0007669"/>
    <property type="project" value="UniProtKB-UniRule"/>
</dbReference>
<dbReference type="FunFam" id="4.10.410.60:FF:000001">
    <property type="entry name" value="50S ribosomal protein L35"/>
    <property type="match status" value="1"/>
</dbReference>
<dbReference type="Gene3D" id="4.10.410.60">
    <property type="match status" value="1"/>
</dbReference>
<dbReference type="HAMAP" id="MF_00514">
    <property type="entry name" value="Ribosomal_bL35"/>
    <property type="match status" value="1"/>
</dbReference>
<dbReference type="InterPro" id="IPR001706">
    <property type="entry name" value="Ribosomal_bL35"/>
</dbReference>
<dbReference type="InterPro" id="IPR021137">
    <property type="entry name" value="Ribosomal_bL35-like"/>
</dbReference>
<dbReference type="InterPro" id="IPR018265">
    <property type="entry name" value="Ribosomal_bL35_CS"/>
</dbReference>
<dbReference type="InterPro" id="IPR037229">
    <property type="entry name" value="Ribosomal_bL35_sf"/>
</dbReference>
<dbReference type="NCBIfam" id="TIGR00001">
    <property type="entry name" value="rpmI_bact"/>
    <property type="match status" value="1"/>
</dbReference>
<dbReference type="PANTHER" id="PTHR33343">
    <property type="entry name" value="54S RIBOSOMAL PROTEIN BL35M"/>
    <property type="match status" value="1"/>
</dbReference>
<dbReference type="PANTHER" id="PTHR33343:SF1">
    <property type="entry name" value="LARGE RIBOSOMAL SUBUNIT PROTEIN BL35M"/>
    <property type="match status" value="1"/>
</dbReference>
<dbReference type="Pfam" id="PF01632">
    <property type="entry name" value="Ribosomal_L35p"/>
    <property type="match status" value="1"/>
</dbReference>
<dbReference type="PRINTS" id="PR00064">
    <property type="entry name" value="RIBOSOMALL35"/>
</dbReference>
<dbReference type="SUPFAM" id="SSF143034">
    <property type="entry name" value="L35p-like"/>
    <property type="match status" value="1"/>
</dbReference>
<dbReference type="PROSITE" id="PS00936">
    <property type="entry name" value="RIBOSOMAL_L35"/>
    <property type="match status" value="1"/>
</dbReference>
<proteinExistence type="inferred from homology"/>
<protein>
    <recommendedName>
        <fullName evidence="1">Large ribosomal subunit protein bL35</fullName>
    </recommendedName>
    <alternativeName>
        <fullName evidence="2">50S ribosomal protein L35</fullName>
    </alternativeName>
</protein>
<gene>
    <name evidence="1" type="primary">rpmI</name>
    <name type="ordered locus">WS0822</name>
</gene>
<name>RL35_WOLSU</name>